<gene>
    <name type="primary">Ifit2</name>
    <name type="synonym">Garg39</name>
    <name type="synonym">Ifi54</name>
    <name type="synonym">Isg54</name>
</gene>
<accession>Q64112</accession>
<accession>Q62385</accession>
<reference key="1">
    <citation type="journal article" date="1994" name="Genomics">
        <title>Structure, chromosome localization, and regulation of expression of the interferon-regulated mouse Ifi54/Ifi56 gene family.</title>
        <authorList>
            <person name="Bluyssen H.A."/>
            <person name="Vlietstra R.J."/>
            <person name="Faber P.W."/>
            <person name="Smit E.M."/>
            <person name="Hagemeijer A."/>
            <person name="Trapman J."/>
        </authorList>
    </citation>
    <scope>NUCLEOTIDE SEQUENCE [GENOMIC DNA]</scope>
</reference>
<reference key="2">
    <citation type="journal article" date="1996" name="Arch. Biochem. Biophys.">
        <title>The glucocorticoid attenuated response genes GARG-16, GARG-39, and GARG-49/IRG2 encode inducible proteins containing multiple tetratricopeptide repeat domains.</title>
        <authorList>
            <person name="Smith J.B."/>
            <person name="Herschman H.R."/>
        </authorList>
    </citation>
    <scope>NUCLEOTIDE SEQUENCE [MRNA]</scope>
</reference>
<reference key="3">
    <citation type="journal article" date="2005" name="Virology">
        <title>Induction and mode of action of the viral stress-inducible murine proteins, P56 and P54.</title>
        <authorList>
            <person name="Terenzi F."/>
            <person name="Pal S."/>
            <person name="Sen G.C."/>
        </authorList>
    </citation>
    <scope>INDUCTION</scope>
    <scope>INTERACTION WITH EIF3C</scope>
</reference>
<reference key="4">
    <citation type="journal article" date="2010" name="Cell">
        <title>A tissue-specific atlas of mouse protein phosphorylation and expression.</title>
        <authorList>
            <person name="Huttlin E.L."/>
            <person name="Jedrychowski M.P."/>
            <person name="Elias J.E."/>
            <person name="Goswami T."/>
            <person name="Rad R."/>
            <person name="Beausoleil S.A."/>
            <person name="Villen J."/>
            <person name="Haas W."/>
            <person name="Sowa M.E."/>
            <person name="Gygi S.P."/>
        </authorList>
    </citation>
    <scope>IDENTIFICATION BY MASS SPECTROMETRY [LARGE SCALE ANALYSIS]</scope>
    <source>
        <tissue>Heart</tissue>
        <tissue>Lung</tissue>
    </source>
</reference>
<reference key="5">
    <citation type="journal article" date="2010" name="Nature">
        <title>2'-O methylation of the viral mRNA cap evades host restriction by IFIT family members.</title>
        <authorList>
            <person name="Daffis S."/>
            <person name="Szretter K.J."/>
            <person name="Schriewer J."/>
            <person name="Li J."/>
            <person name="Youn S."/>
            <person name="Errett J."/>
            <person name="Lin T.Y."/>
            <person name="Schneller S."/>
            <person name="Zust R."/>
            <person name="Dong H."/>
            <person name="Thiel V."/>
            <person name="Sen G.C."/>
            <person name="Fensterl V."/>
            <person name="Klimstra W.B."/>
            <person name="Pierson T.C."/>
            <person name="Buller R.M."/>
            <person name="Gale M. Jr."/>
            <person name="Shi P.Y."/>
            <person name="Diamond M.S."/>
        </authorList>
    </citation>
    <scope>FUNCTION</scope>
</reference>
<reference key="6">
    <citation type="journal article" date="2011" name="J. Interferon Cytokine Res.">
        <title>The ISG56/IFIT1 gene family.</title>
        <authorList>
            <person name="Fensterl V."/>
            <person name="Sen G.C."/>
        </authorList>
    </citation>
    <scope>REVIEW</scope>
</reference>
<reference key="7">
    <citation type="journal article" date="2012" name="PLoS Pathog.">
        <title>Interferon-induced Ifit2/ISG54 protects mice from lethal VSV neuropathogenesis.</title>
        <authorList>
            <person name="Fensterl V."/>
            <person name="Wetzel J.L."/>
            <person name="Ramachandran S."/>
            <person name="Ogino T."/>
            <person name="Stohlman S.A."/>
            <person name="Bergmann C.C."/>
            <person name="Diamond M.S."/>
            <person name="Virgin H.W."/>
            <person name="Sen G.C."/>
        </authorList>
    </citation>
    <scope>FUNCTION</scope>
</reference>
<keyword id="KW-0002">3D-structure</keyword>
<keyword id="KW-0007">Acetylation</keyword>
<keyword id="KW-0051">Antiviral defense</keyword>
<keyword id="KW-0053">Apoptosis</keyword>
<keyword id="KW-0963">Cytoplasm</keyword>
<keyword id="KW-0256">Endoplasmic reticulum</keyword>
<keyword id="KW-0391">Immunity</keyword>
<keyword id="KW-0399">Innate immunity</keyword>
<keyword id="KW-1185">Reference proteome</keyword>
<keyword id="KW-0677">Repeat</keyword>
<keyword id="KW-0694">RNA-binding</keyword>
<keyword id="KW-0802">TPR repeat</keyword>
<name>IFIT2_MOUSE</name>
<evidence type="ECO:0000250" key="1"/>
<evidence type="ECO:0000250" key="2">
    <source>
        <dbReference type="UniProtKB" id="P09913"/>
    </source>
</evidence>
<evidence type="ECO:0000256" key="3">
    <source>
        <dbReference type="SAM" id="MobiDB-lite"/>
    </source>
</evidence>
<evidence type="ECO:0000269" key="4">
    <source>
    </source>
</evidence>
<evidence type="ECO:0000269" key="5">
    <source>
    </source>
</evidence>
<evidence type="ECO:0000269" key="6">
    <source>
    </source>
</evidence>
<evidence type="ECO:0000305" key="7"/>
<organism>
    <name type="scientific">Mus musculus</name>
    <name type="common">Mouse</name>
    <dbReference type="NCBI Taxonomy" id="10090"/>
    <lineage>
        <taxon>Eukaryota</taxon>
        <taxon>Metazoa</taxon>
        <taxon>Chordata</taxon>
        <taxon>Craniata</taxon>
        <taxon>Vertebrata</taxon>
        <taxon>Euteleostomi</taxon>
        <taxon>Mammalia</taxon>
        <taxon>Eutheria</taxon>
        <taxon>Euarchontoglires</taxon>
        <taxon>Glires</taxon>
        <taxon>Rodentia</taxon>
        <taxon>Myomorpha</taxon>
        <taxon>Muroidea</taxon>
        <taxon>Muridae</taxon>
        <taxon>Murinae</taxon>
        <taxon>Mus</taxon>
        <taxon>Mus</taxon>
    </lineage>
</organism>
<dbReference type="EMBL" id="S77713">
    <property type="protein sequence ID" value="AAB33830.1"/>
    <property type="molecule type" value="Genomic_DNA"/>
</dbReference>
<dbReference type="EMBL" id="S77710">
    <property type="protein sequence ID" value="AAB33830.1"/>
    <property type="status" value="JOINED"/>
    <property type="molecule type" value="Genomic_DNA"/>
</dbReference>
<dbReference type="EMBL" id="U43085">
    <property type="protein sequence ID" value="AAC52626.1"/>
    <property type="molecule type" value="mRNA"/>
</dbReference>
<dbReference type="PIR" id="A55508">
    <property type="entry name" value="A55508"/>
</dbReference>
<dbReference type="PIR" id="S71355">
    <property type="entry name" value="S71355"/>
</dbReference>
<dbReference type="RefSeq" id="NP_032358.1">
    <property type="nucleotide sequence ID" value="NM_008332.3"/>
</dbReference>
<dbReference type="RefSeq" id="XP_006526768.1">
    <property type="nucleotide sequence ID" value="XM_006526705.2"/>
</dbReference>
<dbReference type="RefSeq" id="XP_006526769.1">
    <property type="nucleotide sequence ID" value="XM_006526706.3"/>
</dbReference>
<dbReference type="PDB" id="9MK9">
    <property type="method" value="EM"/>
    <property type="resolution" value="3.22 A"/>
    <property type="chains" value="A=7-448"/>
</dbReference>
<dbReference type="PDBsum" id="9MK9"/>
<dbReference type="EMDB" id="EMD-48323"/>
<dbReference type="SMR" id="Q64112"/>
<dbReference type="BioGRID" id="200526">
    <property type="interactions" value="5"/>
</dbReference>
<dbReference type="FunCoup" id="Q64112">
    <property type="interactions" value="329"/>
</dbReference>
<dbReference type="STRING" id="10090.ENSMUSP00000099890"/>
<dbReference type="PhosphoSitePlus" id="Q64112"/>
<dbReference type="PaxDb" id="10090-ENSMUSP00000099890"/>
<dbReference type="PeptideAtlas" id="Q64112"/>
<dbReference type="ProteomicsDB" id="267275"/>
<dbReference type="DNASU" id="15958"/>
<dbReference type="GeneID" id="15958"/>
<dbReference type="KEGG" id="mmu:15958"/>
<dbReference type="AGR" id="MGI:99449"/>
<dbReference type="CTD" id="3433"/>
<dbReference type="MGI" id="MGI:99449">
    <property type="gene designation" value="Ifit2"/>
</dbReference>
<dbReference type="eggNOG" id="KOG1124">
    <property type="taxonomic scope" value="Eukaryota"/>
</dbReference>
<dbReference type="InParanoid" id="Q64112"/>
<dbReference type="OrthoDB" id="10043504at2759"/>
<dbReference type="PhylomeDB" id="Q64112"/>
<dbReference type="BioGRID-ORCS" id="15958">
    <property type="hits" value="1 hit in 79 CRISPR screens"/>
</dbReference>
<dbReference type="ChiTaRS" id="Ifit2">
    <property type="organism name" value="mouse"/>
</dbReference>
<dbReference type="PRO" id="PR:Q64112"/>
<dbReference type="Proteomes" id="UP000000589">
    <property type="component" value="Unplaced"/>
</dbReference>
<dbReference type="RNAct" id="Q64112">
    <property type="molecule type" value="protein"/>
</dbReference>
<dbReference type="GO" id="GO:0005737">
    <property type="term" value="C:cytoplasm"/>
    <property type="evidence" value="ECO:0000250"/>
    <property type="project" value="UniProtKB"/>
</dbReference>
<dbReference type="GO" id="GO:0005783">
    <property type="term" value="C:endoplasmic reticulum"/>
    <property type="evidence" value="ECO:0000250"/>
    <property type="project" value="UniProtKB"/>
</dbReference>
<dbReference type="GO" id="GO:0003723">
    <property type="term" value="F:RNA binding"/>
    <property type="evidence" value="ECO:0007669"/>
    <property type="project" value="UniProtKB-KW"/>
</dbReference>
<dbReference type="GO" id="GO:0140374">
    <property type="term" value="P:antiviral innate immune response"/>
    <property type="evidence" value="ECO:0000314"/>
    <property type="project" value="MGI"/>
</dbReference>
<dbReference type="GO" id="GO:0006915">
    <property type="term" value="P:apoptotic process"/>
    <property type="evidence" value="ECO:0007669"/>
    <property type="project" value="UniProtKB-KW"/>
</dbReference>
<dbReference type="GO" id="GO:0035457">
    <property type="term" value="P:cellular response to interferon-alpha"/>
    <property type="evidence" value="ECO:0000314"/>
    <property type="project" value="MGI"/>
</dbReference>
<dbReference type="GO" id="GO:0043065">
    <property type="term" value="P:positive regulation of apoptotic process"/>
    <property type="evidence" value="ECO:0000250"/>
    <property type="project" value="UniProtKB"/>
</dbReference>
<dbReference type="GO" id="GO:0009615">
    <property type="term" value="P:response to virus"/>
    <property type="evidence" value="ECO:0000315"/>
    <property type="project" value="UniProtKB"/>
</dbReference>
<dbReference type="FunFam" id="1.25.40.10:FF:000036">
    <property type="entry name" value="interferon-induced protein with tetratricopeptide repeats 5"/>
    <property type="match status" value="1"/>
</dbReference>
<dbReference type="Gene3D" id="1.25.40.10">
    <property type="entry name" value="Tetratricopeptide repeat domain"/>
    <property type="match status" value="3"/>
</dbReference>
<dbReference type="InterPro" id="IPR011990">
    <property type="entry name" value="TPR-like_helical_dom_sf"/>
</dbReference>
<dbReference type="InterPro" id="IPR019734">
    <property type="entry name" value="TPR_rpt"/>
</dbReference>
<dbReference type="PANTHER" id="PTHR10271">
    <property type="entry name" value="INTERFERON-INDUCED PROTEIN WITH TETRATRICOPEPTIDE REPEATS"/>
    <property type="match status" value="1"/>
</dbReference>
<dbReference type="PANTHER" id="PTHR10271:SF4">
    <property type="entry name" value="INTERFERON-INDUCED PROTEIN WITH TETRATRICOPEPTIDE REPEATS 2"/>
    <property type="match status" value="1"/>
</dbReference>
<dbReference type="Pfam" id="PF14559">
    <property type="entry name" value="TPR_19"/>
    <property type="match status" value="1"/>
</dbReference>
<dbReference type="SMART" id="SM00028">
    <property type="entry name" value="TPR"/>
    <property type="match status" value="4"/>
</dbReference>
<dbReference type="SUPFAM" id="SSF48452">
    <property type="entry name" value="TPR-like"/>
    <property type="match status" value="2"/>
</dbReference>
<dbReference type="PROSITE" id="PS50005">
    <property type="entry name" value="TPR"/>
    <property type="match status" value="2"/>
</dbReference>
<dbReference type="PROSITE" id="PS50293">
    <property type="entry name" value="TPR_REGION"/>
    <property type="match status" value="1"/>
</dbReference>
<sequence>MSTTSKESLVCNLRQLKCHFTWNLIAEDESLDEFEDRVFNKDEFQNSEFKATMCNILAYVKHCRGLNEAALQCLGEAEGFIQQQHPDQVEIRSLVTWGNYAWVYYHMGQFSKAQAYLDKVKQVCKKFSSPYRIENPALDCEEGWARLKCTKNQNERVKVCFQKALEKDPKNPEFTSGWAIAFYRLDDWPARNYCIDSLEQAIQLSPDNTYVKVLLALKLDAVHVHKNQAMALVEEALKKDPSAIDTLLRAARFYCKVYDTDRAIQLLRKALEKLPNNAYVHYYMGCCYRSKVHHMLNRREMVFSGDRKKLEELIQLAVNHLRKAEEIKEMLEYSCSFLADLYIIAKKYDEADYYFQKELSKDLPPGPKQLLHLRYGNFQFFQMKRQDKAIYHYMEGVKIKKKTIPQKKMREKLQRIALRRLHEDESDSEALHILAFLQENGGGQQADKDSERGVDSANQVPSASLDEDGAEY</sequence>
<comment type="function">
    <text evidence="5 6">IFN-induced antiviral protein which inhibits expression of viral messenger RNAs lacking 2'-O-methylation of the 5' cap. The ribose 2'-O-methylation would provide a molecular signature to distinguish between self and non-self mRNAs by the host during viral infection. Viruses evolved several ways to evade this restriction system such as encoding their own 2'-O-methylase for their mRNAs or by stealing host cap containing the 2'-O-methylation (cap snatching mechanism). Binds AU-rich viral RNAs, with or without 5' triphosphorylation, RNA-binding is required for antiviral activity. Can promote apoptosis.</text>
</comment>
<comment type="subunit">
    <text evidence="1 4">Domain-swapped homodimer. Component of an interferon-dependent multiprotein complex, at least composed of IFIT1, IFIT2 and IFIT3. Interacts with IFIT1 and IFIT3. Interacts with STING1/MITA and disrupts its interaction with MAVS or TBK1 (By similarity). Interacts with EIF3C.</text>
</comment>
<comment type="subcellular location">
    <subcellularLocation>
        <location evidence="1">Cytoplasm</location>
    </subcellularLocation>
    <subcellularLocation>
        <location evidence="1">Endoplasmic reticulum</location>
    </subcellularLocation>
</comment>
<comment type="induction">
    <text evidence="4">By type I interferons, dsRNAs and viruses.</text>
</comment>
<comment type="domain">
    <text evidence="1">The C-terminal part folds into a super-helical structure and has an extensively positively-charged nucleotide-binding channel on its inner surface.</text>
</comment>
<comment type="similarity">
    <text evidence="7">Belongs to the IFIT family.</text>
</comment>
<protein>
    <recommendedName>
        <fullName>Interferon-induced protein with tetratricopeptide repeats 2</fullName>
        <shortName>IFIT-2</shortName>
    </recommendedName>
    <alternativeName>
        <fullName>Glucocorticoid-attenuated response gene 39 protein</fullName>
        <shortName>GARG-39</shortName>
    </alternativeName>
    <alternativeName>
        <fullName>Interferon-induced 54 kDa protein</fullName>
        <shortName>IFI-54K</shortName>
        <shortName>P54</shortName>
    </alternativeName>
</protein>
<proteinExistence type="evidence at protein level"/>
<feature type="initiator methionine" description="Removed" evidence="2">
    <location>
        <position position="1"/>
    </location>
</feature>
<feature type="chain" id="PRO_0000106348" description="Interferon-induced protein with tetratricopeptide repeats 2">
    <location>
        <begin position="2"/>
        <end position="472"/>
    </location>
</feature>
<feature type="repeat" description="TPR 1">
    <location>
        <begin position="51"/>
        <end position="89"/>
    </location>
</feature>
<feature type="repeat" description="TPR 2">
    <location>
        <begin position="90"/>
        <end position="135"/>
    </location>
</feature>
<feature type="repeat" description="TPR 3">
    <location>
        <begin position="136"/>
        <end position="171"/>
    </location>
</feature>
<feature type="repeat" description="TPR 4">
    <location>
        <begin position="172"/>
        <end position="208"/>
    </location>
</feature>
<feature type="repeat" description="TPR 5">
    <location>
        <begin position="244"/>
        <end position="277"/>
    </location>
</feature>
<feature type="repeat" description="TPR 6">
    <location>
        <begin position="278"/>
        <end position="333"/>
    </location>
</feature>
<feature type="repeat" description="TPR 7">
    <location>
        <begin position="334"/>
        <end position="364"/>
    </location>
</feature>
<feature type="repeat" description="TPR 8">
    <location>
        <begin position="365"/>
        <end position="403"/>
    </location>
</feature>
<feature type="repeat" description="TPR 9">
    <location>
        <begin position="404"/>
        <end position="445"/>
    </location>
</feature>
<feature type="region of interest" description="Disordered" evidence="3">
    <location>
        <begin position="441"/>
        <end position="472"/>
    </location>
</feature>
<feature type="modified residue" description="N-acetylserine" evidence="2">
    <location>
        <position position="2"/>
    </location>
</feature>
<feature type="sequence conflict" description="In Ref. 2; AAC52626." evidence="7" ref="2">
    <original>VC</original>
    <variation>ES</variation>
    <location>
        <begin position="10"/>
        <end position="11"/>
    </location>
</feature>
<feature type="sequence conflict" description="In Ref. 2; AAC52626." evidence="7" ref="2">
    <original>F</original>
    <variation>N</variation>
    <location>
        <position position="182"/>
    </location>
</feature>
<feature type="sequence conflict" description="In Ref. 2; AAC52626." evidence="7" ref="2">
    <location>
        <begin position="223"/>
        <end position="224"/>
    </location>
</feature>
<feature type="sequence conflict" description="In Ref. 2; AAC52626." evidence="7" ref="2">
    <original>D</original>
    <variation>A</variation>
    <location>
        <position position="468"/>
    </location>
</feature>